<protein>
    <recommendedName>
        <fullName>CUGBP Elav-like family member 1</fullName>
        <shortName>CELF-1</shortName>
    </recommendedName>
    <alternativeName>
        <fullName>Bruno-like protein 2</fullName>
    </alternativeName>
    <alternativeName>
        <fullName>CUG triplet repeat RNA-binding protein 1</fullName>
        <shortName>CUG-BP1</shortName>
    </alternativeName>
    <alternativeName>
        <fullName>CUG-BP- and ETR-3-like factor 1</fullName>
    </alternativeName>
    <alternativeName>
        <fullName>RNA-binding protein BRUNOL-2</fullName>
    </alternativeName>
</protein>
<gene>
    <name type="primary">CELF1</name>
    <name type="synonym">CUGBP1</name>
</gene>
<accession>Q5R995</accession>
<keyword id="KW-0010">Activator</keyword>
<keyword id="KW-0963">Cytoplasm</keyword>
<keyword id="KW-1017">Isopeptide bond</keyword>
<keyword id="KW-0507">mRNA processing</keyword>
<keyword id="KW-0508">mRNA splicing</keyword>
<keyword id="KW-0539">Nucleus</keyword>
<keyword id="KW-0597">Phosphoprotein</keyword>
<keyword id="KW-1185">Reference proteome</keyword>
<keyword id="KW-0677">Repeat</keyword>
<keyword id="KW-0694">RNA-binding</keyword>
<keyword id="KW-0832">Ubl conjugation</keyword>
<sequence>MAAFKLDFLPEMMVDHCSLNSSPVSKKMNGTLDHPDQPDLDAIKMFVGQVPRTWSEKDLRELFEQYGAVYEINVLRDRSQNPPQSKGCCFVTFYTRKAALEAQNALHNMKVLPGMHHPIQMKPADSEKNNAVEDRKLFIGMISKKCTENDIRVMFSSFGQIEECRILWGPDGLSRGCALVTFTTRAMAQTAIKAMHQAQTMEGCSSPMVVKFADTQKDKEQKRMAQQLQQQMQQISAASVWGNLAGLNTLGPQYLALYLQLLQQTASSGNLNTLSSLHPMGGLNAMQLQNLAALAAAASAAQNTPSGTNALTTSSSPLSVLTSSGSSPSSSSSNSVNPIASLGALQTLAGATAGLNVGSLAGMAALNGGLGSSGLSNGTGSTMEALTQAYSGIQQYAAAALPTLYNQNLLTQQSIGAAGSQKEGPEGANLFIYHLPQEFGDQDLLQMFMPFGNVVSAKVFIDKQTNLSKCFGFVSYDNPVSAQAAIQSMNGFQIGMKRLKVQLKRSKNDSKPY</sequence>
<evidence type="ECO:0000250" key="1"/>
<evidence type="ECO:0000250" key="2">
    <source>
        <dbReference type="UniProtKB" id="P28659"/>
    </source>
</evidence>
<evidence type="ECO:0000250" key="3">
    <source>
        <dbReference type="UniProtKB" id="Q92879"/>
    </source>
</evidence>
<evidence type="ECO:0000255" key="4">
    <source>
        <dbReference type="PROSITE-ProRule" id="PRU00176"/>
    </source>
</evidence>
<evidence type="ECO:0000256" key="5">
    <source>
        <dbReference type="SAM" id="MobiDB-lite"/>
    </source>
</evidence>
<evidence type="ECO:0000305" key="6"/>
<comment type="function">
    <text evidence="2 3">RNA-binding protein implicated in the regulation of several post-transcriptional events. Involved in pre-mRNA alternative splicing, mRNA translation and stability. Mediates exon inclusion and/or exclusion in pre-mRNA that are subject to tissue-specific and developmentally regulated alternative splicing. Specifically activates exon 5 inclusion of cardiac isoforms of TNNT2 during heart remodeling at the juvenile to adult transition. Acts both as an activator and as a repressor of a pair of coregulated exons: promotes inclusion of the smooth muscle (SM) exon but exclusion of the non-muscle (NM) exon in actinin pre-mRNAs. Activates SM exon 5 inclusion by antagonizing the repressive effect of PTB. Promotes exclusion of exon 11 of the INSR pre-mRNA. Inhibits, together with HNRNPH1, insulin receptor (IR) pre-mRNA exon 11 inclusion in myoblast. Increases translation and controls the choice of translation initiation codon of CEBPB mRNA. Increases mRNA translation of CEBPB in aging liver. Increases translation of CDKN1A mRNA by antagonizing the repressive effect of CALR3. Mediates rapid cytoplasmic mRNA deadenylation. Recruits the deadenylase PARN to the poly(A) tail of EDEN-containing mRNAs to promote their deadenylation. Required for completion of spermatogenesis. Binds to (CUG)n triplet repeats in the 3'-UTR of transcripts such as DMPK and to Bruno response elements (BREs). Binds to muscle-specific splicing enhancer (MSE) intronic sites flanking the alternative exon 5 of TNNT2 pre-mRNA. Binds to AU-rich sequences (AREs or EDEN-like) localized in the 3'-UTR of JUN and FOS mRNAs. Binds to the IR RNA. Binds to the 5'-region of CDKN1A and CEBPB mRNAs. Binds with the 5'-region of CEBPB mRNA in aging liver (By similarity). May be a specific regulator of miRNA biogenesis. Binds to primary microRNA pri-MIR140 and, with CELF2, negatively regulates the processing to mature miRNA (By similarity).</text>
</comment>
<comment type="subunit">
    <text evidence="1">Associates with polysomes. Interacts with HNRNPH1; the interaction in RNA-dependent. Interacts with PARN. Component of an EIF2 complex at least composed of CELF1/CUGBP1, CALR, CALR3, EIF2S1, EIF2S2, HSP90B1 and HSPA5 (By similarity).</text>
</comment>
<comment type="subcellular location">
    <subcellularLocation>
        <location evidence="1">Nucleus</location>
    </subcellularLocation>
    <subcellularLocation>
        <location evidence="1">Cytoplasm</location>
    </subcellularLocation>
    <text evidence="1">RNA-binding activity is detected in both nuclear and cytoplasmic compartments.</text>
</comment>
<comment type="domain">
    <text evidence="1">RRM1 and RRM2 domains preferentially target UGU(U/G)-rich mRNA elements.</text>
</comment>
<comment type="similarity">
    <text evidence="6">Belongs to the CELF/BRUNOL family.</text>
</comment>
<feature type="chain" id="PRO_0000295182" description="CUGBP Elav-like family member 1">
    <location>
        <begin position="1"/>
        <end position="513"/>
    </location>
</feature>
<feature type="domain" description="RRM 1" evidence="4">
    <location>
        <begin position="43"/>
        <end position="126"/>
    </location>
</feature>
<feature type="domain" description="RRM 2" evidence="4">
    <location>
        <begin position="135"/>
        <end position="215"/>
    </location>
</feature>
<feature type="domain" description="RRM 3" evidence="4">
    <location>
        <begin position="428"/>
        <end position="506"/>
    </location>
</feature>
<feature type="region of interest" description="Disordered" evidence="5">
    <location>
        <begin position="304"/>
        <end position="336"/>
    </location>
</feature>
<feature type="compositionally biased region" description="Low complexity" evidence="5">
    <location>
        <begin position="311"/>
        <end position="336"/>
    </location>
</feature>
<feature type="modified residue" description="Phosphothreonine" evidence="3">
    <location>
        <position position="31"/>
    </location>
</feature>
<feature type="modified residue" description="Phosphoserine" evidence="3">
    <location>
        <position position="206"/>
    </location>
</feature>
<feature type="modified residue" description="Phosphoserine" evidence="2">
    <location>
        <position position="329"/>
    </location>
</feature>
<feature type="cross-link" description="Glycyl lysine isopeptide (Lys-Gly) (interchain with G-Cter in SUMO2)" evidence="3">
    <location>
        <position position="136"/>
    </location>
</feature>
<proteinExistence type="evidence at transcript level"/>
<dbReference type="EMBL" id="CR859496">
    <property type="protein sequence ID" value="CAH91665.1"/>
    <property type="molecule type" value="mRNA"/>
</dbReference>
<dbReference type="RefSeq" id="NP_001125976.1">
    <property type="nucleotide sequence ID" value="NM_001132504.1"/>
</dbReference>
<dbReference type="BMRB" id="Q5R995"/>
<dbReference type="SMR" id="Q5R995"/>
<dbReference type="FunCoup" id="Q5R995">
    <property type="interactions" value="3489"/>
</dbReference>
<dbReference type="STRING" id="9601.ENSPPYP00000003787"/>
<dbReference type="GeneID" id="100172914"/>
<dbReference type="KEGG" id="pon:100172914"/>
<dbReference type="CTD" id="10658"/>
<dbReference type="eggNOG" id="KOG0144">
    <property type="taxonomic scope" value="Eukaryota"/>
</dbReference>
<dbReference type="InParanoid" id="Q5R995"/>
<dbReference type="OrthoDB" id="410044at2759"/>
<dbReference type="Proteomes" id="UP000001595">
    <property type="component" value="Unplaced"/>
</dbReference>
<dbReference type="GO" id="GO:0005737">
    <property type="term" value="C:cytoplasm"/>
    <property type="evidence" value="ECO:0007669"/>
    <property type="project" value="UniProtKB-SubCell"/>
</dbReference>
<dbReference type="GO" id="GO:0005634">
    <property type="term" value="C:nucleus"/>
    <property type="evidence" value="ECO:0007669"/>
    <property type="project" value="UniProtKB-SubCell"/>
</dbReference>
<dbReference type="GO" id="GO:0003723">
    <property type="term" value="F:RNA binding"/>
    <property type="evidence" value="ECO:0000250"/>
    <property type="project" value="UniProtKB"/>
</dbReference>
<dbReference type="GO" id="GO:0006397">
    <property type="term" value="P:mRNA processing"/>
    <property type="evidence" value="ECO:0007669"/>
    <property type="project" value="UniProtKB-KW"/>
</dbReference>
<dbReference type="GO" id="GO:0043484">
    <property type="term" value="P:regulation of RNA splicing"/>
    <property type="evidence" value="ECO:0000250"/>
    <property type="project" value="UniProtKB"/>
</dbReference>
<dbReference type="GO" id="GO:0008380">
    <property type="term" value="P:RNA splicing"/>
    <property type="evidence" value="ECO:0007669"/>
    <property type="project" value="UniProtKB-KW"/>
</dbReference>
<dbReference type="CDD" id="cd12631">
    <property type="entry name" value="RRM1_CELF1_2_Bruno"/>
    <property type="match status" value="1"/>
</dbReference>
<dbReference type="CDD" id="cd12634">
    <property type="entry name" value="RRM2_CELF1_2"/>
    <property type="match status" value="1"/>
</dbReference>
<dbReference type="CDD" id="cd12638">
    <property type="entry name" value="RRM3_CELF1_2"/>
    <property type="match status" value="1"/>
</dbReference>
<dbReference type="FunFam" id="3.30.70.330:FF:000013">
    <property type="entry name" value="CUGBP Elav-like family member 1 isoform 2"/>
    <property type="match status" value="1"/>
</dbReference>
<dbReference type="FunFam" id="3.30.70.330:FF:000015">
    <property type="entry name" value="CUGBP Elav-like family member 1 isoform 2"/>
    <property type="match status" value="1"/>
</dbReference>
<dbReference type="FunFam" id="3.30.70.330:FF:000016">
    <property type="entry name" value="CUGBP Elav-like family member 1 isoform 2"/>
    <property type="match status" value="1"/>
</dbReference>
<dbReference type="Gene3D" id="3.30.70.330">
    <property type="match status" value="3"/>
</dbReference>
<dbReference type="InterPro" id="IPR034196">
    <property type="entry name" value="CELF1/2_RRM1"/>
</dbReference>
<dbReference type="InterPro" id="IPR034198">
    <property type="entry name" value="CELF1/2_RRM2"/>
</dbReference>
<dbReference type="InterPro" id="IPR034199">
    <property type="entry name" value="CELF1/2_RRM3"/>
</dbReference>
<dbReference type="InterPro" id="IPR012677">
    <property type="entry name" value="Nucleotide-bd_a/b_plait_sf"/>
</dbReference>
<dbReference type="InterPro" id="IPR035979">
    <property type="entry name" value="RBD_domain_sf"/>
</dbReference>
<dbReference type="InterPro" id="IPR000504">
    <property type="entry name" value="RRM_dom"/>
</dbReference>
<dbReference type="PANTHER" id="PTHR24012">
    <property type="entry name" value="RNA BINDING PROTEIN"/>
    <property type="match status" value="1"/>
</dbReference>
<dbReference type="Pfam" id="PF00076">
    <property type="entry name" value="RRM_1"/>
    <property type="match status" value="3"/>
</dbReference>
<dbReference type="SMART" id="SM00360">
    <property type="entry name" value="RRM"/>
    <property type="match status" value="3"/>
</dbReference>
<dbReference type="SUPFAM" id="SSF54928">
    <property type="entry name" value="RNA-binding domain, RBD"/>
    <property type="match status" value="2"/>
</dbReference>
<dbReference type="PROSITE" id="PS50102">
    <property type="entry name" value="RRM"/>
    <property type="match status" value="3"/>
</dbReference>
<reference key="1">
    <citation type="submission" date="2004-11" db="EMBL/GenBank/DDBJ databases">
        <authorList>
            <consortium name="The German cDNA consortium"/>
        </authorList>
    </citation>
    <scope>NUCLEOTIDE SEQUENCE [LARGE SCALE MRNA]</scope>
    <source>
        <tissue>Brain cortex</tissue>
    </source>
</reference>
<name>CELF1_PONAB</name>
<organism>
    <name type="scientific">Pongo abelii</name>
    <name type="common">Sumatran orangutan</name>
    <name type="synonym">Pongo pygmaeus abelii</name>
    <dbReference type="NCBI Taxonomy" id="9601"/>
    <lineage>
        <taxon>Eukaryota</taxon>
        <taxon>Metazoa</taxon>
        <taxon>Chordata</taxon>
        <taxon>Craniata</taxon>
        <taxon>Vertebrata</taxon>
        <taxon>Euteleostomi</taxon>
        <taxon>Mammalia</taxon>
        <taxon>Eutheria</taxon>
        <taxon>Euarchontoglires</taxon>
        <taxon>Primates</taxon>
        <taxon>Haplorrhini</taxon>
        <taxon>Catarrhini</taxon>
        <taxon>Hominidae</taxon>
        <taxon>Pongo</taxon>
    </lineage>
</organism>